<feature type="chain" id="PRO_0000258314" description="Phosphopentomutase">
    <location>
        <begin position="1"/>
        <end position="403"/>
    </location>
</feature>
<feature type="binding site" evidence="1">
    <location>
        <position position="13"/>
    </location>
    <ligand>
        <name>Mn(2+)</name>
        <dbReference type="ChEBI" id="CHEBI:29035"/>
        <label>1</label>
    </ligand>
</feature>
<feature type="binding site" evidence="1">
    <location>
        <position position="298"/>
    </location>
    <ligand>
        <name>Mn(2+)</name>
        <dbReference type="ChEBI" id="CHEBI:29035"/>
        <label>2</label>
    </ligand>
</feature>
<feature type="binding site" evidence="1">
    <location>
        <position position="303"/>
    </location>
    <ligand>
        <name>Mn(2+)</name>
        <dbReference type="ChEBI" id="CHEBI:29035"/>
        <label>2</label>
    </ligand>
</feature>
<feature type="binding site" evidence="1">
    <location>
        <position position="339"/>
    </location>
    <ligand>
        <name>Mn(2+)</name>
        <dbReference type="ChEBI" id="CHEBI:29035"/>
        <label>1</label>
    </ligand>
</feature>
<feature type="binding site" evidence="1">
    <location>
        <position position="340"/>
    </location>
    <ligand>
        <name>Mn(2+)</name>
        <dbReference type="ChEBI" id="CHEBI:29035"/>
        <label>1</label>
    </ligand>
</feature>
<feature type="binding site" evidence="1">
    <location>
        <position position="351"/>
    </location>
    <ligand>
        <name>Mn(2+)</name>
        <dbReference type="ChEBI" id="CHEBI:29035"/>
        <label>2</label>
    </ligand>
</feature>
<sequence>MSKFNRIHLVVLDSVGIGAAPDADKFFNAGVADTDSDTLGHISETAGLSVPNMAKIGLGNISRPIPLKTVPTEDNPTGYVTKLEEVSLGKDTMTGHWEIMGLNITEPFDTFWNGFPEEILTKIEEFSGRKIIREANKPYSGTAVIDDFGPRQMETGELIVYTSADPVLQIAAHEDIIPVEELYKICEYARSITLERPALLGRIIARPYVGEPGNFTRTANRHDYAVSPFQDTVLNKLADAGVPTYAVGKINDIFNGSGITNDMGHNKSNSHGIDTLIKTLQLPEFTKGFSFTNLVDFDANFGHRRDPEGYRDCLHEFDNRLPEIIANMKEDDLLLITADHGNDPTYAGTDHTREYIPLLAYSASFTGNGLIPQGHFADISATVAENFGVDTAMIGESFLGHLK</sequence>
<keyword id="KW-0963">Cytoplasm</keyword>
<keyword id="KW-0413">Isomerase</keyword>
<keyword id="KW-0464">Manganese</keyword>
<keyword id="KW-0479">Metal-binding</keyword>
<protein>
    <recommendedName>
        <fullName evidence="1">Phosphopentomutase</fullName>
        <ecNumber evidence="1">5.4.2.7</ecNumber>
    </recommendedName>
    <alternativeName>
        <fullName evidence="1">Phosphodeoxyribomutase</fullName>
    </alternativeName>
</protein>
<name>DEOB_STRPD</name>
<gene>
    <name evidence="1" type="primary">deoB</name>
    <name type="ordered locus">MGAS10270_Spy0754</name>
</gene>
<accession>Q1JHB7</accession>
<proteinExistence type="inferred from homology"/>
<dbReference type="EC" id="5.4.2.7" evidence="1"/>
<dbReference type="EMBL" id="CP000260">
    <property type="protein sequence ID" value="ABF33819.1"/>
    <property type="molecule type" value="Genomic_DNA"/>
</dbReference>
<dbReference type="SMR" id="Q1JHB7"/>
<dbReference type="KEGG" id="sph:MGAS10270_Spy0754"/>
<dbReference type="HOGENOM" id="CLU_053861_0_0_9"/>
<dbReference type="UniPathway" id="UPA00002">
    <property type="reaction ID" value="UER00467"/>
</dbReference>
<dbReference type="Proteomes" id="UP000002436">
    <property type="component" value="Chromosome"/>
</dbReference>
<dbReference type="GO" id="GO:0005829">
    <property type="term" value="C:cytosol"/>
    <property type="evidence" value="ECO:0007669"/>
    <property type="project" value="TreeGrafter"/>
</dbReference>
<dbReference type="GO" id="GO:0000287">
    <property type="term" value="F:magnesium ion binding"/>
    <property type="evidence" value="ECO:0007669"/>
    <property type="project" value="InterPro"/>
</dbReference>
<dbReference type="GO" id="GO:0030145">
    <property type="term" value="F:manganese ion binding"/>
    <property type="evidence" value="ECO:0007669"/>
    <property type="project" value="UniProtKB-UniRule"/>
</dbReference>
<dbReference type="GO" id="GO:0008973">
    <property type="term" value="F:phosphopentomutase activity"/>
    <property type="evidence" value="ECO:0007669"/>
    <property type="project" value="UniProtKB-UniRule"/>
</dbReference>
<dbReference type="GO" id="GO:0006018">
    <property type="term" value="P:2-deoxyribose 1-phosphate catabolic process"/>
    <property type="evidence" value="ECO:0007669"/>
    <property type="project" value="UniProtKB-UniRule"/>
</dbReference>
<dbReference type="GO" id="GO:0006015">
    <property type="term" value="P:5-phosphoribose 1-diphosphate biosynthetic process"/>
    <property type="evidence" value="ECO:0007669"/>
    <property type="project" value="UniProtKB-UniPathway"/>
</dbReference>
<dbReference type="GO" id="GO:0043094">
    <property type="term" value="P:metabolic compound salvage"/>
    <property type="evidence" value="ECO:0007669"/>
    <property type="project" value="InterPro"/>
</dbReference>
<dbReference type="GO" id="GO:0009117">
    <property type="term" value="P:nucleotide metabolic process"/>
    <property type="evidence" value="ECO:0007669"/>
    <property type="project" value="InterPro"/>
</dbReference>
<dbReference type="CDD" id="cd16009">
    <property type="entry name" value="PPM"/>
    <property type="match status" value="1"/>
</dbReference>
<dbReference type="FunFam" id="3.30.70.1250:FF:000001">
    <property type="entry name" value="Phosphopentomutase"/>
    <property type="match status" value="1"/>
</dbReference>
<dbReference type="Gene3D" id="3.40.720.10">
    <property type="entry name" value="Alkaline Phosphatase, subunit A"/>
    <property type="match status" value="1"/>
</dbReference>
<dbReference type="Gene3D" id="3.30.70.1250">
    <property type="entry name" value="Phosphopentomutase"/>
    <property type="match status" value="1"/>
</dbReference>
<dbReference type="HAMAP" id="MF_00740">
    <property type="entry name" value="Phosphopentomut"/>
    <property type="match status" value="1"/>
</dbReference>
<dbReference type="InterPro" id="IPR017850">
    <property type="entry name" value="Alkaline_phosphatase_core_sf"/>
</dbReference>
<dbReference type="InterPro" id="IPR010045">
    <property type="entry name" value="DeoB"/>
</dbReference>
<dbReference type="InterPro" id="IPR006124">
    <property type="entry name" value="Metalloenzyme"/>
</dbReference>
<dbReference type="InterPro" id="IPR024052">
    <property type="entry name" value="Phosphopentomutase_DeoB_cap_sf"/>
</dbReference>
<dbReference type="NCBIfam" id="TIGR01696">
    <property type="entry name" value="deoB"/>
    <property type="match status" value="1"/>
</dbReference>
<dbReference type="NCBIfam" id="NF003766">
    <property type="entry name" value="PRK05362.1"/>
    <property type="match status" value="1"/>
</dbReference>
<dbReference type="PANTHER" id="PTHR21110">
    <property type="entry name" value="PHOSPHOPENTOMUTASE"/>
    <property type="match status" value="1"/>
</dbReference>
<dbReference type="PANTHER" id="PTHR21110:SF0">
    <property type="entry name" value="PHOSPHOPENTOMUTASE"/>
    <property type="match status" value="1"/>
</dbReference>
<dbReference type="Pfam" id="PF01676">
    <property type="entry name" value="Metalloenzyme"/>
    <property type="match status" value="1"/>
</dbReference>
<dbReference type="PIRSF" id="PIRSF001491">
    <property type="entry name" value="Ppentomutase"/>
    <property type="match status" value="1"/>
</dbReference>
<dbReference type="SUPFAM" id="SSF53649">
    <property type="entry name" value="Alkaline phosphatase-like"/>
    <property type="match status" value="1"/>
</dbReference>
<dbReference type="SUPFAM" id="SSF143856">
    <property type="entry name" value="DeoB insert domain-like"/>
    <property type="match status" value="1"/>
</dbReference>
<reference key="1">
    <citation type="journal article" date="2006" name="Proc. Natl. Acad. Sci. U.S.A.">
        <title>Molecular genetic anatomy of inter- and intraserotype variation in the human bacterial pathogen group A Streptococcus.</title>
        <authorList>
            <person name="Beres S.B."/>
            <person name="Richter E.W."/>
            <person name="Nagiec M.J."/>
            <person name="Sumby P."/>
            <person name="Porcella S.F."/>
            <person name="DeLeo F.R."/>
            <person name="Musser J.M."/>
        </authorList>
    </citation>
    <scope>NUCLEOTIDE SEQUENCE [LARGE SCALE GENOMIC DNA]</scope>
    <source>
        <strain>MGAS10270</strain>
    </source>
</reference>
<evidence type="ECO:0000255" key="1">
    <source>
        <dbReference type="HAMAP-Rule" id="MF_00740"/>
    </source>
</evidence>
<comment type="function">
    <text evidence="1">Isomerase that catalyzes the conversion of deoxy-ribose 1-phosphate (dRib-1-P) and ribose 1-phosphate (Rib-1-P) to deoxy-ribose 5-phosphate (dRib-5-P) and ribose 5-phosphate (Rib-5-P), respectively.</text>
</comment>
<comment type="catalytic activity">
    <reaction evidence="1">
        <text>2-deoxy-alpha-D-ribose 1-phosphate = 2-deoxy-D-ribose 5-phosphate</text>
        <dbReference type="Rhea" id="RHEA:27658"/>
        <dbReference type="ChEBI" id="CHEBI:57259"/>
        <dbReference type="ChEBI" id="CHEBI:62877"/>
        <dbReference type="EC" id="5.4.2.7"/>
    </reaction>
</comment>
<comment type="catalytic activity">
    <reaction evidence="1">
        <text>alpha-D-ribose 1-phosphate = D-ribose 5-phosphate</text>
        <dbReference type="Rhea" id="RHEA:18793"/>
        <dbReference type="ChEBI" id="CHEBI:57720"/>
        <dbReference type="ChEBI" id="CHEBI:78346"/>
        <dbReference type="EC" id="5.4.2.7"/>
    </reaction>
</comment>
<comment type="cofactor">
    <cofactor evidence="1">
        <name>Mn(2+)</name>
        <dbReference type="ChEBI" id="CHEBI:29035"/>
    </cofactor>
    <text evidence="1">Binds 2 manganese ions.</text>
</comment>
<comment type="pathway">
    <text evidence="1">Carbohydrate degradation; 2-deoxy-D-ribose 1-phosphate degradation; D-glyceraldehyde 3-phosphate and acetaldehyde from 2-deoxy-alpha-D-ribose 1-phosphate: step 1/2.</text>
</comment>
<comment type="subcellular location">
    <subcellularLocation>
        <location evidence="1">Cytoplasm</location>
    </subcellularLocation>
</comment>
<comment type="similarity">
    <text evidence="1">Belongs to the phosphopentomutase family.</text>
</comment>
<organism>
    <name type="scientific">Streptococcus pyogenes serotype M2 (strain MGAS10270)</name>
    <dbReference type="NCBI Taxonomy" id="370552"/>
    <lineage>
        <taxon>Bacteria</taxon>
        <taxon>Bacillati</taxon>
        <taxon>Bacillota</taxon>
        <taxon>Bacilli</taxon>
        <taxon>Lactobacillales</taxon>
        <taxon>Streptococcaceae</taxon>
        <taxon>Streptococcus</taxon>
    </lineage>
</organism>